<gene>
    <name evidence="4" type="primary">GRIA1</name>
    <name evidence="2" type="synonym">GLUR1</name>
</gene>
<sequence length="906" mass="101520">MQHIFAFFCTGFLGAVVGANFPNNIQIGGLFPNQQSQEHAAFRFALSQLTEPPKLLPQIDIVNISDSFEMTYRFCSQFSKGVYAIFGFYERRTVNMLTSFCGALHVCFITPSFPVDTSNQFVLQLRPELQDALISIIDHYKWQKFVYIYDADRGLSVLQKVLDTAAEKNWQVTAVNILTTTEEGYRMLFQDLEKKKERLVVVDCESERLNAILGQIIKLEKNGIGYHYILANLGFMDIDLNKFKESGANVTGFQLVNYTDTIPAKIMQQWKNSDARDHTRVDWKRPKYTSALTYDGVKVMAEAFQSLRRQRIDISRRGNAGDCLANPAVPWGQGIDIQRALQQVRFEGLTGNVQFNEKGRRTNYTLHVIEMKHDGIRKIGYWNEDDKFVPAATDAQAGGDNSSVQNRTYIVTTILEDPYVMLKKNANQFEGNDRYEGYCVELAAEIAKHVGYSYRLEIVSDGKYGARDPDTKAWNGMVGELVYGRADVAVAPLTITLVREEVIDFSKPFMSLGISIMIKKPQKSKPGVFSFLDPLAYEIWMCIVFAYIGVSVVLFLVSRFSPYEWHSEEFEEGRDQTTSDQSNEFGIFNSLWFSLGAFMQQGCDISPRSLSGRIVGGVWWFFTLIIISSYTANLAAFLTVERMVSPIESAEDLAKQTEIAYGTLEAGSTKEFFRRSKIAVFEKMWTYMKSAEPSVFVRTTEEGMIRVRKSKGKYAYLLESTMNEYIEQRKPCDTMKVGGNLDSKGYGIATPKGSALRNPVNLAVLKLNEQGLLDKLKNKWWYDKGECGSGGGDSKDKTSALSLSNVAGVFYILIGGLGLAMLVALIEFCYKSRSESKRMKGFCLIPQQSINEAIRTSTLPRNSGAGASSAGSGENGRVVSHDFPKSMQSIPCMSHSSGMPLGATGL</sequence>
<feature type="signal peptide" evidence="6">
    <location>
        <begin position="1"/>
        <end position="18"/>
    </location>
</feature>
<feature type="chain" id="PRO_0000271752" description="Glutamate receptor 1">
    <location>
        <begin position="19"/>
        <end position="906"/>
    </location>
</feature>
<feature type="topological domain" description="Extracellular" evidence="1">
    <location>
        <begin position="19"/>
        <end position="536"/>
    </location>
</feature>
<feature type="transmembrane region" description="Helical" evidence="1">
    <location>
        <begin position="537"/>
        <end position="557"/>
    </location>
</feature>
<feature type="topological domain" description="Cytoplasmic" evidence="1">
    <location>
        <begin position="558"/>
        <end position="584"/>
    </location>
</feature>
<feature type="intramembrane region" description="Helical; Pore-forming" evidence="1">
    <location>
        <begin position="585"/>
        <end position="600"/>
    </location>
</feature>
<feature type="intramembrane region" evidence="1">
    <location>
        <begin position="601"/>
        <end position="603"/>
    </location>
</feature>
<feature type="topological domain" description="Cytoplasmic" evidence="1">
    <location>
        <begin position="604"/>
        <end position="609"/>
    </location>
</feature>
<feature type="transmembrane region" description="Helical" evidence="1">
    <location>
        <begin position="610"/>
        <end position="630"/>
    </location>
</feature>
<feature type="topological domain" description="Extracellular" evidence="1">
    <location>
        <begin position="631"/>
        <end position="805"/>
    </location>
</feature>
<feature type="transmembrane region" description="Helical; Name=M4" evidence="1">
    <location>
        <begin position="806"/>
        <end position="826"/>
    </location>
</feature>
<feature type="topological domain" description="Cytoplasmic" evidence="1">
    <location>
        <begin position="827"/>
        <end position="906"/>
    </location>
</feature>
<feature type="region of interest" description="Disordered" evidence="7">
    <location>
        <begin position="861"/>
        <end position="880"/>
    </location>
</feature>
<feature type="short sequence motif" description="PDZ-binding" evidence="1">
    <location>
        <begin position="903"/>
        <end position="906"/>
    </location>
</feature>
<feature type="compositionally biased region" description="Low complexity" evidence="7">
    <location>
        <begin position="863"/>
        <end position="872"/>
    </location>
</feature>
<feature type="binding site" evidence="5">
    <location>
        <position position="492"/>
    </location>
    <ligand>
        <name>L-glutamate</name>
        <dbReference type="ChEBI" id="CHEBI:29985"/>
    </ligand>
</feature>
<feature type="binding site" evidence="5">
    <location>
        <position position="494"/>
    </location>
    <ligand>
        <name>L-glutamate</name>
        <dbReference type="ChEBI" id="CHEBI:29985"/>
    </ligand>
</feature>
<feature type="binding site" evidence="5">
    <location>
        <position position="499"/>
    </location>
    <ligand>
        <name>L-glutamate</name>
        <dbReference type="ChEBI" id="CHEBI:29985"/>
    </ligand>
</feature>
<feature type="binding site" evidence="5">
    <location>
        <position position="668"/>
    </location>
    <ligand>
        <name>L-glutamate</name>
        <dbReference type="ChEBI" id="CHEBI:29985"/>
    </ligand>
</feature>
<feature type="binding site" evidence="5">
    <location>
        <position position="669"/>
    </location>
    <ligand>
        <name>L-glutamate</name>
        <dbReference type="ChEBI" id="CHEBI:29985"/>
    </ligand>
</feature>
<feature type="binding site" evidence="5">
    <location>
        <position position="719"/>
    </location>
    <ligand>
        <name>L-glutamate</name>
        <dbReference type="ChEBI" id="CHEBI:29985"/>
    </ligand>
</feature>
<feature type="modified residue" description="Phosphoserine" evidence="2">
    <location>
        <position position="645"/>
    </location>
</feature>
<feature type="modified residue" description="Phosphoserine" evidence="2">
    <location>
        <position position="710"/>
    </location>
</feature>
<feature type="modified residue" description="Phosphoserine" evidence="2">
    <location>
        <position position="849"/>
    </location>
</feature>
<feature type="modified residue" description="Phosphoserine" evidence="2">
    <location>
        <position position="863"/>
    </location>
</feature>
<feature type="lipid moiety-binding region" description="S-palmitoyl cysteine" evidence="1">
    <location>
        <position position="603"/>
    </location>
</feature>
<feature type="lipid moiety-binding region" description="S-palmitoyl cysteine" evidence="1">
    <location>
        <position position="829"/>
    </location>
</feature>
<feature type="glycosylation site" description="N-linked (GlcNAc...) asparagine" evidence="6">
    <location>
        <position position="63"/>
    </location>
</feature>
<feature type="glycosylation site" description="N-linked (GlcNAc...) asparagine" evidence="6">
    <location>
        <position position="249"/>
    </location>
</feature>
<feature type="glycosylation site" description="N-linked (GlcNAc...) asparagine" evidence="6">
    <location>
        <position position="257"/>
    </location>
</feature>
<feature type="glycosylation site" description="N-linked (GlcNAc...) asparagine" evidence="6">
    <location>
        <position position="363"/>
    </location>
</feature>
<feature type="glycosylation site" description="N-linked (GlcNAc...) asparagine" evidence="6">
    <location>
        <position position="401"/>
    </location>
</feature>
<feature type="glycosylation site" description="N-linked (GlcNAc...) asparagine" evidence="6">
    <location>
        <position position="406"/>
    </location>
</feature>
<feature type="disulfide bond" evidence="3">
    <location>
        <begin position="75"/>
        <end position="323"/>
    </location>
</feature>
<feature type="disulfide bond" evidence="3">
    <location>
        <begin position="732"/>
        <end position="787"/>
    </location>
</feature>
<dbReference type="EMBL" id="DQ159929">
    <property type="protein sequence ID" value="ABA47253.1"/>
    <property type="molecule type" value="mRNA"/>
</dbReference>
<dbReference type="RefSeq" id="NP_001306365.1">
    <property type="nucleotide sequence ID" value="NM_001319436.1"/>
</dbReference>
<dbReference type="SMR" id="Q38PU8"/>
<dbReference type="STRING" id="9541.ENSMFAP00000023475"/>
<dbReference type="GlyCosmos" id="Q38PU8">
    <property type="glycosylation" value="6 sites, No reported glycans"/>
</dbReference>
<dbReference type="eggNOG" id="KOG1054">
    <property type="taxonomic scope" value="Eukaryota"/>
</dbReference>
<dbReference type="Proteomes" id="UP000233100">
    <property type="component" value="Unplaced"/>
</dbReference>
<dbReference type="GO" id="GO:0032281">
    <property type="term" value="C:AMPA glutamate receptor complex"/>
    <property type="evidence" value="ECO:0000250"/>
    <property type="project" value="UniProtKB"/>
</dbReference>
<dbReference type="GO" id="GO:0030425">
    <property type="term" value="C:dendrite"/>
    <property type="evidence" value="ECO:0000250"/>
    <property type="project" value="UniProtKB"/>
</dbReference>
<dbReference type="GO" id="GO:0043197">
    <property type="term" value="C:dendritic spine"/>
    <property type="evidence" value="ECO:0000250"/>
    <property type="project" value="UniProtKB"/>
</dbReference>
<dbReference type="GO" id="GO:0031901">
    <property type="term" value="C:early endosome membrane"/>
    <property type="evidence" value="ECO:0000250"/>
    <property type="project" value="UniProtKB"/>
</dbReference>
<dbReference type="GO" id="GO:0005789">
    <property type="term" value="C:endoplasmic reticulum membrane"/>
    <property type="evidence" value="ECO:0000250"/>
    <property type="project" value="UniProtKB"/>
</dbReference>
<dbReference type="GO" id="GO:0098794">
    <property type="term" value="C:postsynapse"/>
    <property type="evidence" value="ECO:0000250"/>
    <property type="project" value="UniProtKB"/>
</dbReference>
<dbReference type="GO" id="GO:0014069">
    <property type="term" value="C:postsynaptic density"/>
    <property type="evidence" value="ECO:0000250"/>
    <property type="project" value="UniProtKB"/>
</dbReference>
<dbReference type="GO" id="GO:0098839">
    <property type="term" value="C:postsynaptic density membrane"/>
    <property type="evidence" value="ECO:0000250"/>
    <property type="project" value="UniProtKB"/>
</dbReference>
<dbReference type="GO" id="GO:0045211">
    <property type="term" value="C:postsynaptic membrane"/>
    <property type="evidence" value="ECO:0000250"/>
    <property type="project" value="UniProtKB"/>
</dbReference>
<dbReference type="GO" id="GO:0098793">
    <property type="term" value="C:presynapse"/>
    <property type="evidence" value="ECO:0000250"/>
    <property type="project" value="UniProtKB"/>
</dbReference>
<dbReference type="GO" id="GO:0055038">
    <property type="term" value="C:recycling endosome membrane"/>
    <property type="evidence" value="ECO:0000250"/>
    <property type="project" value="UniProtKB"/>
</dbReference>
<dbReference type="GO" id="GO:0045202">
    <property type="term" value="C:synapse"/>
    <property type="evidence" value="ECO:0000250"/>
    <property type="project" value="UniProtKB"/>
</dbReference>
<dbReference type="GO" id="GO:0004971">
    <property type="term" value="F:AMPA glutamate receptor activity"/>
    <property type="evidence" value="ECO:0000250"/>
    <property type="project" value="UniProtKB"/>
</dbReference>
<dbReference type="GO" id="GO:0022849">
    <property type="term" value="F:glutamate-gated calcium ion channel activity"/>
    <property type="evidence" value="ECO:0000250"/>
    <property type="project" value="UniProtKB"/>
</dbReference>
<dbReference type="GO" id="GO:0004970">
    <property type="term" value="F:glutamate-gated receptor activity"/>
    <property type="evidence" value="ECO:0000250"/>
    <property type="project" value="UniProtKB"/>
</dbReference>
<dbReference type="CDD" id="cd06390">
    <property type="entry name" value="PBP1_iGluR_AMPA_GluR1"/>
    <property type="match status" value="1"/>
</dbReference>
<dbReference type="CDD" id="cd13729">
    <property type="entry name" value="PBP2_iGluR_AMPA_GluR1"/>
    <property type="match status" value="1"/>
</dbReference>
<dbReference type="FunFam" id="1.10.287.70:FF:000067">
    <property type="entry name" value="glutamate receptor 2 isoform X1"/>
    <property type="match status" value="1"/>
</dbReference>
<dbReference type="FunFam" id="3.40.190.10:FF:000001">
    <property type="entry name" value="Glutamate receptor ionotropic, kainate 2"/>
    <property type="match status" value="1"/>
</dbReference>
<dbReference type="FunFam" id="3.40.50.2300:FF:000004">
    <property type="entry name" value="Glutamate receptor, ionotropic, AMPA 2"/>
    <property type="match status" value="1"/>
</dbReference>
<dbReference type="FunFam" id="3.40.190.10:FF:000666">
    <property type="entry name" value="Glutamate receptor, ionotropic, AMPA 2a"/>
    <property type="match status" value="1"/>
</dbReference>
<dbReference type="Gene3D" id="1.10.287.70">
    <property type="match status" value="2"/>
</dbReference>
<dbReference type="Gene3D" id="3.40.50.2300">
    <property type="match status" value="2"/>
</dbReference>
<dbReference type="Gene3D" id="3.40.190.10">
    <property type="entry name" value="Periplasmic binding protein-like II"/>
    <property type="match status" value="2"/>
</dbReference>
<dbReference type="InterPro" id="IPR001828">
    <property type="entry name" value="ANF_lig-bd_rcpt"/>
</dbReference>
<dbReference type="InterPro" id="IPR019594">
    <property type="entry name" value="Glu/Gly-bd"/>
</dbReference>
<dbReference type="InterPro" id="IPR001508">
    <property type="entry name" value="Iono_Glu_rcpt_met"/>
</dbReference>
<dbReference type="InterPro" id="IPR015683">
    <property type="entry name" value="Ionotropic_Glu_rcpt"/>
</dbReference>
<dbReference type="InterPro" id="IPR001320">
    <property type="entry name" value="Iontro_rcpt_C"/>
</dbReference>
<dbReference type="InterPro" id="IPR028082">
    <property type="entry name" value="Peripla_BP_I"/>
</dbReference>
<dbReference type="PANTHER" id="PTHR18966">
    <property type="entry name" value="IONOTROPIC GLUTAMATE RECEPTOR"/>
    <property type="match status" value="1"/>
</dbReference>
<dbReference type="Pfam" id="PF01094">
    <property type="entry name" value="ANF_receptor"/>
    <property type="match status" value="1"/>
</dbReference>
<dbReference type="Pfam" id="PF00060">
    <property type="entry name" value="Lig_chan"/>
    <property type="match status" value="1"/>
</dbReference>
<dbReference type="Pfam" id="PF10613">
    <property type="entry name" value="Lig_chan-Glu_bd"/>
    <property type="match status" value="1"/>
</dbReference>
<dbReference type="PRINTS" id="PR00177">
    <property type="entry name" value="NMDARECEPTOR"/>
</dbReference>
<dbReference type="SMART" id="SM00918">
    <property type="entry name" value="Lig_chan-Glu_bd"/>
    <property type="match status" value="1"/>
</dbReference>
<dbReference type="SMART" id="SM00079">
    <property type="entry name" value="PBPe"/>
    <property type="match status" value="1"/>
</dbReference>
<dbReference type="SUPFAM" id="SSF53822">
    <property type="entry name" value="Periplasmic binding protein-like I"/>
    <property type="match status" value="1"/>
</dbReference>
<dbReference type="SUPFAM" id="SSF53850">
    <property type="entry name" value="Periplasmic binding protein-like II"/>
    <property type="match status" value="1"/>
</dbReference>
<dbReference type="SUPFAM" id="SSF81324">
    <property type="entry name" value="Voltage-gated potassium channels"/>
    <property type="match status" value="1"/>
</dbReference>
<keyword id="KW-1003">Cell membrane</keyword>
<keyword id="KW-0966">Cell projection</keyword>
<keyword id="KW-1015">Disulfide bond</keyword>
<keyword id="KW-0256">Endoplasmic reticulum</keyword>
<keyword id="KW-0967">Endosome</keyword>
<keyword id="KW-0325">Glycoprotein</keyword>
<keyword id="KW-0407">Ion channel</keyword>
<keyword id="KW-0406">Ion transport</keyword>
<keyword id="KW-1071">Ligand-gated ion channel</keyword>
<keyword id="KW-0449">Lipoprotein</keyword>
<keyword id="KW-0472">Membrane</keyword>
<keyword id="KW-0564">Palmitate</keyword>
<keyword id="KW-0597">Phosphoprotein</keyword>
<keyword id="KW-0628">Postsynaptic cell membrane</keyword>
<keyword id="KW-0675">Receptor</keyword>
<keyword id="KW-1185">Reference proteome</keyword>
<keyword id="KW-0732">Signal</keyword>
<keyword id="KW-0770">Synapse</keyword>
<keyword id="KW-0812">Transmembrane</keyword>
<keyword id="KW-1133">Transmembrane helix</keyword>
<keyword id="KW-0813">Transport</keyword>
<evidence type="ECO:0000250" key="1"/>
<evidence type="ECO:0000250" key="2">
    <source>
        <dbReference type="UniProtKB" id="P19490"/>
    </source>
</evidence>
<evidence type="ECO:0000250" key="3">
    <source>
        <dbReference type="UniProtKB" id="P23818"/>
    </source>
</evidence>
<evidence type="ECO:0000250" key="4">
    <source>
        <dbReference type="UniProtKB" id="P42261"/>
    </source>
</evidence>
<evidence type="ECO:0000250" key="5">
    <source>
        <dbReference type="UniProtKB" id="P42262"/>
    </source>
</evidence>
<evidence type="ECO:0000255" key="6"/>
<evidence type="ECO:0000256" key="7">
    <source>
        <dbReference type="SAM" id="MobiDB-lite"/>
    </source>
</evidence>
<evidence type="ECO:0000305" key="8"/>
<comment type="function">
    <text evidence="2">Ionotropic glutamate receptor that functions as a ligand-gated cation channel, gated by L-glutamate and glutamatergic agonists such as alpha-amino-3-hydroxy-5-methyl-4-isoxazolepropionic acid (AMPA), quisqualic acid, and kainic acid. L-glutamate acts as an excitatory neurotransmitter at many synapses in the central nervous system. Binding of the excitatory neurotransmitter L-glutamate induces a conformation change, leading to the opening of the cation channel, and thereby converts the chemical signal to an electrical impulse upon entry of monovalent and divalent cations such as sodium and calcium. The receptor then desensitizes rapidly and enters in a transient inactive state, characterized by the presence of bound agonist. In the presence of CACNG2 or CACNG4 or CACNG7 or CACNG8, shows resensitization which is characterized by a delayed accumulation of current flux upon continued application of L-glutamate. Calcium (Ca(2+)) permeability depends on subunits composition and, heteromeric channels containing edited GRIA2 subunit are calcium-impermeable. Also permeable to other divalents cations such as strontium(2+) and magnesium(2+) and monovalent cations such as potassium(1+) and lithium(1+).</text>
</comment>
<comment type="catalytic activity">
    <reaction evidence="2">
        <text>Ca(2+)(in) = Ca(2+)(out)</text>
        <dbReference type="Rhea" id="RHEA:29671"/>
        <dbReference type="ChEBI" id="CHEBI:29108"/>
    </reaction>
</comment>
<comment type="catalytic activity">
    <reaction evidence="2">
        <text>Na(+)(in) = Na(+)(out)</text>
        <dbReference type="Rhea" id="RHEA:34963"/>
        <dbReference type="ChEBI" id="CHEBI:29101"/>
    </reaction>
</comment>
<comment type="catalytic activity">
    <reaction evidence="2">
        <text>Mg(2+)(in) = Mg(2+)(out)</text>
        <dbReference type="Rhea" id="RHEA:29827"/>
        <dbReference type="ChEBI" id="CHEBI:18420"/>
    </reaction>
</comment>
<comment type="catalytic activity">
    <reaction evidence="2">
        <text>Li(+)(in) = Li(+)(out)</text>
        <dbReference type="Rhea" id="RHEA:78551"/>
        <dbReference type="ChEBI" id="CHEBI:49713"/>
    </reaction>
</comment>
<comment type="catalytic activity">
    <reaction evidence="2">
        <text>K(+)(in) = K(+)(out)</text>
        <dbReference type="Rhea" id="RHEA:29463"/>
        <dbReference type="ChEBI" id="CHEBI:29103"/>
    </reaction>
</comment>
<comment type="catalytic activity">
    <reaction evidence="2">
        <text>Sr(2+)(in) = Sr(2+)(out)</text>
        <dbReference type="Rhea" id="RHEA:78679"/>
        <dbReference type="ChEBI" id="CHEBI:35104"/>
    </reaction>
</comment>
<comment type="subunit">
    <text evidence="2 3 4">Homotetramer or heterotetramer of pore-forming glutamate receptor subunits; heteromeric assembly can be the result of both receptor subtype and flip-flop forms and according the composition, one partner can be dominant with respect to the fast desensitizing current component, whereas the other can determine the steady-state component (By similarity). Tetramers may be formed by the dimerization of dimers (By similarity). Found in a complex with GRIA2, GRIA3, GRIA4, CNIH2, CNIH3, CACNG2, CACNG3, CACNG4, CACNG5, CACNG7 and CACNG8 (By similarity). Interacts with HIP1 and RASGRF2. Interacts with SYNDIG1 and GRIA2 (By similarity). Interacts with DLG1 (via C-terminus). Interacts with LRFN1. Interacts with PRKG2. Interacts with CNIH2 and CACNG2. Interacts with CACNG5; this interaction modulates the gating. Interacts (via C-terminus) with PDLIM4 (via LIM domain); this interaction as well as the interaction of PDLIM4 with alpha-actinin is required for their colocalization in early endosomes (By similarity). Interacts with SNX27 (via PDZ domain); the interaction is required for recycling to the plasma membrane when endocytosed and prevent degradation in lysosomes. Interacts (via PDZ-binding motif) with SHANK3 (via PDZ domain) (By similarity). Interacts with CACNG3; associates GRIA1 with the adapter protein complex 4 (AP-4) to target GRIA1 to the somatodendritic compartment of neurons (By similarity). Interacts with CACNG2; this interaction mediates traffick to the plasma membrane and modulation of desensitization. Interaction with CNIH2 and CNIH3; this interaction promotes expression at the plasma membrane and extensively modulates their gating properties by slowing deactivation and desensitization kinetics (By similarity). Found in a complex with GRIA2, GRIA3, GRIA4, DLG4, CACNG8 and CNIH2 (By similarity).</text>
</comment>
<comment type="subcellular location">
    <subcellularLocation>
        <location evidence="3">Cell membrane</location>
        <topology evidence="3">Multi-pass membrane protein</topology>
    </subcellularLocation>
    <subcellularLocation>
        <location evidence="2">Endoplasmic reticulum membrane</location>
        <topology evidence="2">Multi-pass membrane protein</topology>
    </subcellularLocation>
    <subcellularLocation>
        <location evidence="3">Postsynaptic cell membrane</location>
        <topology evidence="3">Multi-pass membrane protein</topology>
    </subcellularLocation>
    <subcellularLocation>
        <location evidence="3">Postsynaptic density membrane</location>
        <topology evidence="3">Multi-pass membrane protein</topology>
    </subcellularLocation>
    <subcellularLocation>
        <location evidence="3">Cell projection</location>
        <location evidence="3">Dendrite</location>
    </subcellularLocation>
    <subcellularLocation>
        <location evidence="3">Cell projection</location>
        <location evidence="3">Dendritic spine</location>
    </subcellularLocation>
    <subcellularLocation>
        <location evidence="2">Early endosome membrane</location>
        <topology evidence="2">Multi-pass membrane protein</topology>
    </subcellularLocation>
    <subcellularLocation>
        <location evidence="2">Recycling endosome membrane</location>
        <topology evidence="2">Multi-pass membrane protein</topology>
    </subcellularLocation>
    <subcellularLocation>
        <location evidence="3">Presynapse</location>
    </subcellularLocation>
    <subcellularLocation>
        <location evidence="3">Synapse</location>
    </subcellularLocation>
    <text evidence="2 3">Interaction with CACNG2, CNIH2 and CNIH3 promotes cell surface expression. Colocalizes with PDLIM4 in early endosomes. Displays a somatodendritic localization and is excluded from axons in neurons (By similarity). Localized to cone photoreceptor pedicles (By similarity).</text>
</comment>
<comment type="domain">
    <text evidence="4">The M4 transmembrane segment mediates tetramerization and is required for cell surface expression.</text>
</comment>
<comment type="PTM">
    <text evidence="2 3">Phosphorylated at Ser-645. Phosphorylated at Ser-710 by PKC. Phosphorylated at Ser-849 by PKC, PKA and CAMK2. Phosphorylated at Ser-863 by PKC, PKA and PRKG2 (By similarity). Phosphorylation of Ser-863 is reduced by induction of long-term depression and increased by induction of long-term potentiation (By similarity).</text>
</comment>
<comment type="PTM">
    <text evidence="3 4">Palmitoylated. Depalmitoylated by CPT1C and upon L-glutamate stimulation. ZDHHC3/GODZ specifically palmitoylates Cys-603, which leads to Golgi retention and decreased cell surface expression (By similarity). In contrast, Cys-829 palmitoylation does not affect cell surface expression but regulates stimulation-dependent endocytosis (By similarity).</text>
</comment>
<comment type="miscellaneous">
    <text evidence="2">The postsynaptic actions of L-glutamate are mediated by a variety of receptors that are named according to their selective agonists. This receptor binds AMPA (quisqualate) &gt; L-glutamate &gt; kainate.</text>
</comment>
<comment type="similarity">
    <text evidence="8">Belongs to the glutamate-gated ion channel (TC 1.A.10.1) family. GRIA1 subfamily.</text>
</comment>
<name>GRIA1_MACFA</name>
<organism>
    <name type="scientific">Macaca fascicularis</name>
    <name type="common">Crab-eating macaque</name>
    <name type="synonym">Cynomolgus monkey</name>
    <dbReference type="NCBI Taxonomy" id="9541"/>
    <lineage>
        <taxon>Eukaryota</taxon>
        <taxon>Metazoa</taxon>
        <taxon>Chordata</taxon>
        <taxon>Craniata</taxon>
        <taxon>Vertebrata</taxon>
        <taxon>Euteleostomi</taxon>
        <taxon>Mammalia</taxon>
        <taxon>Eutheria</taxon>
        <taxon>Euarchontoglires</taxon>
        <taxon>Primates</taxon>
        <taxon>Haplorrhini</taxon>
        <taxon>Catarrhini</taxon>
        <taxon>Cercopithecidae</taxon>
        <taxon>Cercopithecinae</taxon>
        <taxon>Macaca</taxon>
    </lineage>
</organism>
<accession>Q38PU8</accession>
<reference key="1">
    <citation type="journal article" date="2006" name="Mol. Vis.">
        <title>Expression and sequences of genes encoding glutamate receptors and transporters in primate retina determined using 3'-end amplification polymerase chain reaction.</title>
        <authorList>
            <person name="Hanna M.C."/>
            <person name="Calkins D.J."/>
        </authorList>
    </citation>
    <scope>NUCLEOTIDE SEQUENCE [MRNA]</scope>
    <source>
        <tissue>Retina</tissue>
    </source>
</reference>
<protein>
    <recommendedName>
        <fullName evidence="4">Glutamate receptor 1</fullName>
        <shortName>GluR-1</shortName>
    </recommendedName>
    <alternativeName>
        <fullName>AMPA-selective glutamate receptor 1</fullName>
    </alternativeName>
    <alternativeName>
        <fullName evidence="2">GluR-A</fullName>
    </alternativeName>
    <alternativeName>
        <fullName evidence="2">GluR-K1</fullName>
    </alternativeName>
    <alternativeName>
        <fullName>Glutamate receptor ionotropic, AMPA 1</fullName>
        <shortName>GluA1</shortName>
    </alternativeName>
</protein>
<proteinExistence type="evidence at transcript level"/>